<organism>
    <name type="scientific">Picrophilus torridus (strain ATCC 700027 / DSM 9790 / JCM 10055 / NBRC 100828 / KAW 2/3)</name>
    <dbReference type="NCBI Taxonomy" id="1122961"/>
    <lineage>
        <taxon>Archaea</taxon>
        <taxon>Methanobacteriati</taxon>
        <taxon>Thermoplasmatota</taxon>
        <taxon>Thermoplasmata</taxon>
        <taxon>Thermoplasmatales</taxon>
        <taxon>Picrophilaceae</taxon>
        <taxon>Picrophilus</taxon>
    </lineage>
</organism>
<evidence type="ECO:0000255" key="1">
    <source>
        <dbReference type="HAMAP-Rule" id="MF_01081"/>
    </source>
</evidence>
<evidence type="ECO:0000256" key="2">
    <source>
        <dbReference type="SAM" id="MobiDB-lite"/>
    </source>
</evidence>
<accession>Q6L1A0</accession>
<proteinExistence type="inferred from homology"/>
<name>TRUB_PICTO</name>
<sequence length="349" mass="39148">MSNLNGFIVVDKPKGPTSHQIDSWIRDITGEPRVGHIGTLDPGVSGVLVMALGKATKLIDIVHRESKEYVSVLRTYDKYDHDSIKSVFKEFTGKIYQIPPVRSAVSRELRIREIYNLELLEMDEKFVLFKVCCESGTYIRTLCTDIGYVLGSGGQMAELRRTRTGPFDESMCHTLQEVSDAFKLKSMGNEKLFKNIFIPMDFIFIKYPKVIVKETALKNIAHGSDIYPAGIHAITGSPKKGDVVAVYTEKNELVATGTMMVNADEIYDLKVIDIDNVLIETGDNDGKDSLVRKDNRWKDIPVQKPERKLHGNLQGSQEWKDTGNRGNPKRGGTGSKGFSSGFRKRKAKR</sequence>
<comment type="function">
    <text evidence="1">Could be responsible for synthesis of pseudouridine from uracil-55 in the psi GC loop of transfer RNAs.</text>
</comment>
<comment type="catalytic activity">
    <reaction evidence="1">
        <text>uridine(55) in tRNA = pseudouridine(55) in tRNA</text>
        <dbReference type="Rhea" id="RHEA:42532"/>
        <dbReference type="Rhea" id="RHEA-COMP:10101"/>
        <dbReference type="Rhea" id="RHEA-COMP:10102"/>
        <dbReference type="ChEBI" id="CHEBI:65314"/>
        <dbReference type="ChEBI" id="CHEBI:65315"/>
        <dbReference type="EC" id="5.4.99.25"/>
    </reaction>
</comment>
<comment type="similarity">
    <text evidence="1">Belongs to the pseudouridine synthase TruB family. Type 2 subfamily.</text>
</comment>
<reference key="1">
    <citation type="journal article" date="2004" name="Proc. Natl. Acad. Sci. U.S.A.">
        <title>Genome sequence of Picrophilus torridus and its implications for life around pH 0.</title>
        <authorList>
            <person name="Fuetterer O."/>
            <person name="Angelov A."/>
            <person name="Liesegang H."/>
            <person name="Gottschalk G."/>
            <person name="Schleper C."/>
            <person name="Schepers B."/>
            <person name="Dock C."/>
            <person name="Antranikian G."/>
            <person name="Liebl W."/>
        </authorList>
    </citation>
    <scope>NUCLEOTIDE SEQUENCE [LARGE SCALE GENOMIC DNA]</scope>
    <source>
        <strain>ATCC 700027 / DSM 9790 / JCM 10055 / NBRC 100828 / KAW 2/3</strain>
    </source>
</reference>
<gene>
    <name evidence="1" type="primary">truB</name>
    <name type="ordered locus">PTO0667</name>
</gene>
<keyword id="KW-0413">Isomerase</keyword>
<keyword id="KW-0819">tRNA processing</keyword>
<dbReference type="EC" id="5.4.99.25" evidence="1"/>
<dbReference type="EMBL" id="AE017261">
    <property type="protein sequence ID" value="AAT43252.1"/>
    <property type="molecule type" value="Genomic_DNA"/>
</dbReference>
<dbReference type="RefSeq" id="WP_011177468.1">
    <property type="nucleotide sequence ID" value="NC_005877.1"/>
</dbReference>
<dbReference type="SMR" id="Q6L1A0"/>
<dbReference type="FunCoup" id="Q6L1A0">
    <property type="interactions" value="114"/>
</dbReference>
<dbReference type="STRING" id="263820.PTO0667"/>
<dbReference type="PaxDb" id="263820-PTO0667"/>
<dbReference type="GeneID" id="2843985"/>
<dbReference type="KEGG" id="pto:PTO0667"/>
<dbReference type="PATRIC" id="fig|263820.9.peg.700"/>
<dbReference type="eggNOG" id="arCOG00987">
    <property type="taxonomic scope" value="Archaea"/>
</dbReference>
<dbReference type="HOGENOM" id="CLU_032087_3_0_2"/>
<dbReference type="InParanoid" id="Q6L1A0"/>
<dbReference type="OrthoDB" id="35866at2157"/>
<dbReference type="Proteomes" id="UP000000438">
    <property type="component" value="Chromosome"/>
</dbReference>
<dbReference type="GO" id="GO:0003723">
    <property type="term" value="F:RNA binding"/>
    <property type="evidence" value="ECO:0007669"/>
    <property type="project" value="InterPro"/>
</dbReference>
<dbReference type="GO" id="GO:0160148">
    <property type="term" value="F:tRNA pseudouridine(55) synthase activity"/>
    <property type="evidence" value="ECO:0007669"/>
    <property type="project" value="UniProtKB-EC"/>
</dbReference>
<dbReference type="GO" id="GO:0000495">
    <property type="term" value="P:box H/ACA sno(s)RNA 3'-end processing"/>
    <property type="evidence" value="ECO:0007669"/>
    <property type="project" value="TreeGrafter"/>
</dbReference>
<dbReference type="GO" id="GO:1990481">
    <property type="term" value="P:mRNA pseudouridine synthesis"/>
    <property type="evidence" value="ECO:0007669"/>
    <property type="project" value="TreeGrafter"/>
</dbReference>
<dbReference type="GO" id="GO:0031118">
    <property type="term" value="P:rRNA pseudouridine synthesis"/>
    <property type="evidence" value="ECO:0007669"/>
    <property type="project" value="TreeGrafter"/>
</dbReference>
<dbReference type="GO" id="GO:0031120">
    <property type="term" value="P:snRNA pseudouridine synthesis"/>
    <property type="evidence" value="ECO:0007669"/>
    <property type="project" value="TreeGrafter"/>
</dbReference>
<dbReference type="GO" id="GO:0031119">
    <property type="term" value="P:tRNA pseudouridine synthesis"/>
    <property type="evidence" value="ECO:0007669"/>
    <property type="project" value="UniProtKB-UniRule"/>
</dbReference>
<dbReference type="CDD" id="cd07953">
    <property type="entry name" value="PUA"/>
    <property type="match status" value="1"/>
</dbReference>
<dbReference type="Gene3D" id="3.30.2350.10">
    <property type="entry name" value="Pseudouridine synthase"/>
    <property type="match status" value="1"/>
</dbReference>
<dbReference type="Gene3D" id="2.30.130.10">
    <property type="entry name" value="PUA domain"/>
    <property type="match status" value="1"/>
</dbReference>
<dbReference type="HAMAP" id="MF_01081">
    <property type="entry name" value="TruB_arch"/>
    <property type="match status" value="1"/>
</dbReference>
<dbReference type="InterPro" id="IPR020103">
    <property type="entry name" value="PsdUridine_synth_cat_dom_sf"/>
</dbReference>
<dbReference type="InterPro" id="IPR002501">
    <property type="entry name" value="PsdUridine_synth_N"/>
</dbReference>
<dbReference type="InterPro" id="IPR002478">
    <property type="entry name" value="PUA"/>
</dbReference>
<dbReference type="InterPro" id="IPR015947">
    <property type="entry name" value="PUA-like_sf"/>
</dbReference>
<dbReference type="InterPro" id="IPR036974">
    <property type="entry name" value="PUA_sf"/>
</dbReference>
<dbReference type="InterPro" id="IPR004802">
    <property type="entry name" value="tRNA_PsdUridine_synth_B_fam"/>
</dbReference>
<dbReference type="InterPro" id="IPR026326">
    <property type="entry name" value="TruB_arch"/>
</dbReference>
<dbReference type="InterPro" id="IPR032819">
    <property type="entry name" value="TruB_C"/>
</dbReference>
<dbReference type="NCBIfam" id="TIGR00425">
    <property type="entry name" value="CBF5"/>
    <property type="match status" value="1"/>
</dbReference>
<dbReference type="NCBIfam" id="NF003280">
    <property type="entry name" value="PRK04270.1"/>
    <property type="match status" value="1"/>
</dbReference>
<dbReference type="PANTHER" id="PTHR23127">
    <property type="entry name" value="CENTROMERE/MICROTUBULE BINDING PROTEIN CBF5"/>
    <property type="match status" value="1"/>
</dbReference>
<dbReference type="PANTHER" id="PTHR23127:SF0">
    <property type="entry name" value="H_ACA RIBONUCLEOPROTEIN COMPLEX SUBUNIT DKC1"/>
    <property type="match status" value="1"/>
</dbReference>
<dbReference type="Pfam" id="PF01472">
    <property type="entry name" value="PUA"/>
    <property type="match status" value="1"/>
</dbReference>
<dbReference type="Pfam" id="PF16198">
    <property type="entry name" value="TruB_C_2"/>
    <property type="match status" value="1"/>
</dbReference>
<dbReference type="Pfam" id="PF01509">
    <property type="entry name" value="TruB_N"/>
    <property type="match status" value="1"/>
</dbReference>
<dbReference type="SMART" id="SM00359">
    <property type="entry name" value="PUA"/>
    <property type="match status" value="1"/>
</dbReference>
<dbReference type="SUPFAM" id="SSF55120">
    <property type="entry name" value="Pseudouridine synthase"/>
    <property type="match status" value="1"/>
</dbReference>
<dbReference type="SUPFAM" id="SSF88697">
    <property type="entry name" value="PUA domain-like"/>
    <property type="match status" value="1"/>
</dbReference>
<dbReference type="PROSITE" id="PS50890">
    <property type="entry name" value="PUA"/>
    <property type="match status" value="1"/>
</dbReference>
<feature type="chain" id="PRO_0000121965" description="Probable tRNA pseudouridine synthase B">
    <location>
        <begin position="1"/>
        <end position="349"/>
    </location>
</feature>
<feature type="domain" description="PUA" evidence="1">
    <location>
        <begin position="207"/>
        <end position="279"/>
    </location>
</feature>
<feature type="region of interest" description="Disordered" evidence="2">
    <location>
        <begin position="300"/>
        <end position="349"/>
    </location>
</feature>
<feature type="compositionally biased region" description="Basic and acidic residues" evidence="2">
    <location>
        <begin position="300"/>
        <end position="309"/>
    </location>
</feature>
<feature type="active site" description="Nucleophile" evidence="1">
    <location>
        <position position="41"/>
    </location>
</feature>
<protein>
    <recommendedName>
        <fullName evidence="1">Probable tRNA pseudouridine synthase B</fullName>
        <ecNumber evidence="1">5.4.99.25</ecNumber>
    </recommendedName>
    <alternativeName>
        <fullName evidence="1">tRNA pseudouridine(55) synthase</fullName>
        <shortName evidence="1">Psi55 synthase</shortName>
    </alternativeName>
    <alternativeName>
        <fullName evidence="1">tRNA pseudouridylate synthase</fullName>
    </alternativeName>
    <alternativeName>
        <fullName evidence="1">tRNA-uridine isomerase</fullName>
    </alternativeName>
</protein>